<evidence type="ECO:0000255" key="1">
    <source>
        <dbReference type="HAMAP-Rule" id="MF_00238"/>
    </source>
</evidence>
<sequence>MGFQIAIDGPAASGKSTIAKLLAEKLGFDHLNTGATYRAVAVYLHEKGLSSSSAEEEIENVLKDLKIDYVNGRVYINGEDYTEKIQSPEAGVLASNFARLEVVRRHLVRIQREICDDKNIVVEGRDIGTVVLPNAHLKIFLTASLEARVERKLKEYQKRGLKVTKEEVERELISRDEQDSKRNVAPLKPAEDAVIIDTTSMSVEEVLDRILKLVRERMNT</sequence>
<name>KCY_THEMA</name>
<protein>
    <recommendedName>
        <fullName evidence="1">Cytidylate kinase</fullName>
        <shortName evidence="1">CK</shortName>
        <ecNumber evidence="1">2.7.4.25</ecNumber>
    </recommendedName>
    <alternativeName>
        <fullName evidence="1">Cytidine monophosphate kinase</fullName>
        <shortName evidence="1">CMP kinase</shortName>
    </alternativeName>
</protein>
<accession>Q9X1F6</accession>
<organism>
    <name type="scientific">Thermotoga maritima (strain ATCC 43589 / DSM 3109 / JCM 10099 / NBRC 100826 / MSB8)</name>
    <dbReference type="NCBI Taxonomy" id="243274"/>
    <lineage>
        <taxon>Bacteria</taxon>
        <taxon>Thermotogati</taxon>
        <taxon>Thermotogota</taxon>
        <taxon>Thermotogae</taxon>
        <taxon>Thermotogales</taxon>
        <taxon>Thermotogaceae</taxon>
        <taxon>Thermotoga</taxon>
    </lineage>
</organism>
<comment type="catalytic activity">
    <reaction evidence="1">
        <text>CMP + ATP = CDP + ADP</text>
        <dbReference type="Rhea" id="RHEA:11600"/>
        <dbReference type="ChEBI" id="CHEBI:30616"/>
        <dbReference type="ChEBI" id="CHEBI:58069"/>
        <dbReference type="ChEBI" id="CHEBI:60377"/>
        <dbReference type="ChEBI" id="CHEBI:456216"/>
        <dbReference type="EC" id="2.7.4.25"/>
    </reaction>
</comment>
<comment type="catalytic activity">
    <reaction evidence="1">
        <text>dCMP + ATP = dCDP + ADP</text>
        <dbReference type="Rhea" id="RHEA:25094"/>
        <dbReference type="ChEBI" id="CHEBI:30616"/>
        <dbReference type="ChEBI" id="CHEBI:57566"/>
        <dbReference type="ChEBI" id="CHEBI:58593"/>
        <dbReference type="ChEBI" id="CHEBI:456216"/>
        <dbReference type="EC" id="2.7.4.25"/>
    </reaction>
</comment>
<comment type="subcellular location">
    <subcellularLocation>
        <location evidence="1">Cytoplasm</location>
    </subcellularLocation>
</comment>
<comment type="similarity">
    <text evidence="1">Belongs to the cytidylate kinase family. Type 1 subfamily.</text>
</comment>
<proteinExistence type="inferred from homology"/>
<dbReference type="EC" id="2.7.4.25" evidence="1"/>
<dbReference type="EMBL" id="AE000512">
    <property type="protein sequence ID" value="AAD36512.1"/>
    <property type="molecule type" value="Genomic_DNA"/>
</dbReference>
<dbReference type="PIR" id="H72252">
    <property type="entry name" value="H72252"/>
</dbReference>
<dbReference type="RefSeq" id="NP_229242.1">
    <property type="nucleotide sequence ID" value="NC_000853.1"/>
</dbReference>
<dbReference type="RefSeq" id="WP_004081716.1">
    <property type="nucleotide sequence ID" value="NZ_CP011107.1"/>
</dbReference>
<dbReference type="SMR" id="Q9X1F6"/>
<dbReference type="FunCoup" id="Q9X1F6">
    <property type="interactions" value="211"/>
</dbReference>
<dbReference type="STRING" id="243274.TM_1443"/>
<dbReference type="PaxDb" id="243274-THEMA_07100"/>
<dbReference type="EnsemblBacteria" id="AAD36512">
    <property type="protein sequence ID" value="AAD36512"/>
    <property type="gene ID" value="TM_1443"/>
</dbReference>
<dbReference type="KEGG" id="tma:TM1443"/>
<dbReference type="KEGG" id="tmi:THEMA_07100"/>
<dbReference type="KEGG" id="tmm:Tmari_1449"/>
<dbReference type="KEGG" id="tmw:THMA_1473"/>
<dbReference type="eggNOG" id="COG0283">
    <property type="taxonomic scope" value="Bacteria"/>
</dbReference>
<dbReference type="InParanoid" id="Q9X1F6"/>
<dbReference type="OrthoDB" id="9807434at2"/>
<dbReference type="Proteomes" id="UP000008183">
    <property type="component" value="Chromosome"/>
</dbReference>
<dbReference type="GO" id="GO:0005829">
    <property type="term" value="C:cytosol"/>
    <property type="evidence" value="ECO:0000318"/>
    <property type="project" value="GO_Central"/>
</dbReference>
<dbReference type="GO" id="GO:0004127">
    <property type="term" value="F:(d)CMP kinase activity"/>
    <property type="evidence" value="ECO:0000318"/>
    <property type="project" value="GO_Central"/>
</dbReference>
<dbReference type="GO" id="GO:0005524">
    <property type="term" value="F:ATP binding"/>
    <property type="evidence" value="ECO:0007669"/>
    <property type="project" value="UniProtKB-UniRule"/>
</dbReference>
<dbReference type="GO" id="GO:0036430">
    <property type="term" value="F:CMP kinase activity"/>
    <property type="evidence" value="ECO:0007669"/>
    <property type="project" value="RHEA"/>
</dbReference>
<dbReference type="GO" id="GO:0036431">
    <property type="term" value="F:dCMP kinase activity"/>
    <property type="evidence" value="ECO:0007669"/>
    <property type="project" value="RHEA"/>
</dbReference>
<dbReference type="GO" id="GO:0015949">
    <property type="term" value="P:nucleobase-containing small molecule interconversion"/>
    <property type="evidence" value="ECO:0000318"/>
    <property type="project" value="GO_Central"/>
</dbReference>
<dbReference type="GO" id="GO:0006220">
    <property type="term" value="P:pyrimidine nucleotide metabolic process"/>
    <property type="evidence" value="ECO:0007669"/>
    <property type="project" value="UniProtKB-UniRule"/>
</dbReference>
<dbReference type="CDD" id="cd02020">
    <property type="entry name" value="CMPK"/>
    <property type="match status" value="1"/>
</dbReference>
<dbReference type="FunFam" id="3.40.50.300:FF:002458">
    <property type="entry name" value="Cytidylate kinase"/>
    <property type="match status" value="1"/>
</dbReference>
<dbReference type="Gene3D" id="3.40.50.300">
    <property type="entry name" value="P-loop containing nucleotide triphosphate hydrolases"/>
    <property type="match status" value="1"/>
</dbReference>
<dbReference type="HAMAP" id="MF_00238">
    <property type="entry name" value="Cytidyl_kinase_type1"/>
    <property type="match status" value="1"/>
</dbReference>
<dbReference type="InterPro" id="IPR003136">
    <property type="entry name" value="Cytidylate_kin"/>
</dbReference>
<dbReference type="InterPro" id="IPR011994">
    <property type="entry name" value="Cytidylate_kinase_dom"/>
</dbReference>
<dbReference type="InterPro" id="IPR027417">
    <property type="entry name" value="P-loop_NTPase"/>
</dbReference>
<dbReference type="NCBIfam" id="TIGR00017">
    <property type="entry name" value="cmk"/>
    <property type="match status" value="1"/>
</dbReference>
<dbReference type="PANTHER" id="PTHR21299:SF2">
    <property type="entry name" value="CYTIDYLATE KINASE"/>
    <property type="match status" value="1"/>
</dbReference>
<dbReference type="PANTHER" id="PTHR21299">
    <property type="entry name" value="CYTIDYLATE KINASE/PANTOATE-BETA-ALANINE LIGASE"/>
    <property type="match status" value="1"/>
</dbReference>
<dbReference type="Pfam" id="PF02224">
    <property type="entry name" value="Cytidylate_kin"/>
    <property type="match status" value="1"/>
</dbReference>
<dbReference type="SUPFAM" id="SSF52540">
    <property type="entry name" value="P-loop containing nucleoside triphosphate hydrolases"/>
    <property type="match status" value="1"/>
</dbReference>
<reference key="1">
    <citation type="journal article" date="1999" name="Nature">
        <title>Evidence for lateral gene transfer between Archaea and Bacteria from genome sequence of Thermotoga maritima.</title>
        <authorList>
            <person name="Nelson K.E."/>
            <person name="Clayton R.A."/>
            <person name="Gill S.R."/>
            <person name="Gwinn M.L."/>
            <person name="Dodson R.J."/>
            <person name="Haft D.H."/>
            <person name="Hickey E.K."/>
            <person name="Peterson J.D."/>
            <person name="Nelson W.C."/>
            <person name="Ketchum K.A."/>
            <person name="McDonald L.A."/>
            <person name="Utterback T.R."/>
            <person name="Malek J.A."/>
            <person name="Linher K.D."/>
            <person name="Garrett M.M."/>
            <person name="Stewart A.M."/>
            <person name="Cotton M.D."/>
            <person name="Pratt M.S."/>
            <person name="Phillips C.A."/>
            <person name="Richardson D.L."/>
            <person name="Heidelberg J.F."/>
            <person name="Sutton G.G."/>
            <person name="Fleischmann R.D."/>
            <person name="Eisen J.A."/>
            <person name="White O."/>
            <person name="Salzberg S.L."/>
            <person name="Smith H.O."/>
            <person name="Venter J.C."/>
            <person name="Fraser C.M."/>
        </authorList>
    </citation>
    <scope>NUCLEOTIDE SEQUENCE [LARGE SCALE GENOMIC DNA]</scope>
    <source>
        <strain>ATCC 43589 / DSM 3109 / JCM 10099 / NBRC 100826 / MSB8</strain>
    </source>
</reference>
<keyword id="KW-0067">ATP-binding</keyword>
<keyword id="KW-0963">Cytoplasm</keyword>
<keyword id="KW-0418">Kinase</keyword>
<keyword id="KW-0547">Nucleotide-binding</keyword>
<keyword id="KW-1185">Reference proteome</keyword>
<keyword id="KW-0808">Transferase</keyword>
<feature type="chain" id="PRO_0000131993" description="Cytidylate kinase">
    <location>
        <begin position="1"/>
        <end position="220"/>
    </location>
</feature>
<feature type="binding site" evidence="1">
    <location>
        <begin position="9"/>
        <end position="17"/>
    </location>
    <ligand>
        <name>ATP</name>
        <dbReference type="ChEBI" id="CHEBI:30616"/>
    </ligand>
</feature>
<gene>
    <name evidence="1" type="primary">cmk</name>
    <name type="ordered locus">TM_1443</name>
</gene>